<dbReference type="EC" id="1.3.1.98" evidence="1"/>
<dbReference type="EMBL" id="AE005672">
    <property type="protein sequence ID" value="AAK75488.1"/>
    <property type="molecule type" value="Genomic_DNA"/>
</dbReference>
<dbReference type="PIR" id="G95161">
    <property type="entry name" value="G95161"/>
</dbReference>
<dbReference type="RefSeq" id="WP_000116181.1">
    <property type="nucleotide sequence ID" value="NZ_CP155539.1"/>
</dbReference>
<dbReference type="SMR" id="P65466"/>
<dbReference type="PaxDb" id="170187-SP_1390"/>
<dbReference type="EnsemblBacteria" id="AAK75488">
    <property type="protein sequence ID" value="AAK75488"/>
    <property type="gene ID" value="SP_1390"/>
</dbReference>
<dbReference type="KEGG" id="spn:SP_1390"/>
<dbReference type="eggNOG" id="COG0812">
    <property type="taxonomic scope" value="Bacteria"/>
</dbReference>
<dbReference type="PhylomeDB" id="P65466"/>
<dbReference type="BioCyc" id="SPNE170187:G1FZB-1399-MONOMER"/>
<dbReference type="UniPathway" id="UPA00219"/>
<dbReference type="Proteomes" id="UP000000585">
    <property type="component" value="Chromosome"/>
</dbReference>
<dbReference type="GO" id="GO:0005829">
    <property type="term" value="C:cytosol"/>
    <property type="evidence" value="ECO:0007669"/>
    <property type="project" value="TreeGrafter"/>
</dbReference>
<dbReference type="GO" id="GO:0071949">
    <property type="term" value="F:FAD binding"/>
    <property type="evidence" value="ECO:0007669"/>
    <property type="project" value="InterPro"/>
</dbReference>
<dbReference type="GO" id="GO:0008762">
    <property type="term" value="F:UDP-N-acetylmuramate dehydrogenase activity"/>
    <property type="evidence" value="ECO:0007669"/>
    <property type="project" value="UniProtKB-UniRule"/>
</dbReference>
<dbReference type="GO" id="GO:0051301">
    <property type="term" value="P:cell division"/>
    <property type="evidence" value="ECO:0007669"/>
    <property type="project" value="UniProtKB-KW"/>
</dbReference>
<dbReference type="GO" id="GO:0071555">
    <property type="term" value="P:cell wall organization"/>
    <property type="evidence" value="ECO:0007669"/>
    <property type="project" value="UniProtKB-KW"/>
</dbReference>
<dbReference type="GO" id="GO:0009252">
    <property type="term" value="P:peptidoglycan biosynthetic process"/>
    <property type="evidence" value="ECO:0007669"/>
    <property type="project" value="UniProtKB-UniRule"/>
</dbReference>
<dbReference type="GO" id="GO:0008360">
    <property type="term" value="P:regulation of cell shape"/>
    <property type="evidence" value="ECO:0007669"/>
    <property type="project" value="UniProtKB-KW"/>
</dbReference>
<dbReference type="Gene3D" id="3.30.465.10">
    <property type="match status" value="1"/>
</dbReference>
<dbReference type="Gene3D" id="3.90.78.10">
    <property type="entry name" value="UDP-N-acetylenolpyruvoylglucosamine reductase, C-terminal domain"/>
    <property type="match status" value="1"/>
</dbReference>
<dbReference type="Gene3D" id="3.30.43.10">
    <property type="entry name" value="Uridine Diphospho-n-acetylenolpyruvylglucosamine Reductase, domain 2"/>
    <property type="match status" value="1"/>
</dbReference>
<dbReference type="HAMAP" id="MF_00037">
    <property type="entry name" value="MurB"/>
    <property type="match status" value="1"/>
</dbReference>
<dbReference type="InterPro" id="IPR016166">
    <property type="entry name" value="FAD-bd_PCMH"/>
</dbReference>
<dbReference type="InterPro" id="IPR036318">
    <property type="entry name" value="FAD-bd_PCMH-like_sf"/>
</dbReference>
<dbReference type="InterPro" id="IPR016167">
    <property type="entry name" value="FAD-bd_PCMH_sub1"/>
</dbReference>
<dbReference type="InterPro" id="IPR016169">
    <property type="entry name" value="FAD-bd_PCMH_sub2"/>
</dbReference>
<dbReference type="InterPro" id="IPR003170">
    <property type="entry name" value="MurB"/>
</dbReference>
<dbReference type="InterPro" id="IPR011601">
    <property type="entry name" value="MurB_C"/>
</dbReference>
<dbReference type="InterPro" id="IPR036635">
    <property type="entry name" value="MurB_C_sf"/>
</dbReference>
<dbReference type="InterPro" id="IPR006094">
    <property type="entry name" value="Oxid_FAD_bind_N"/>
</dbReference>
<dbReference type="NCBIfam" id="TIGR00179">
    <property type="entry name" value="murB"/>
    <property type="match status" value="1"/>
</dbReference>
<dbReference type="NCBIfam" id="NF010480">
    <property type="entry name" value="PRK13905.1"/>
    <property type="match status" value="1"/>
</dbReference>
<dbReference type="PANTHER" id="PTHR21071">
    <property type="entry name" value="UDP-N-ACETYLENOLPYRUVOYLGLUCOSAMINE REDUCTASE"/>
    <property type="match status" value="1"/>
</dbReference>
<dbReference type="PANTHER" id="PTHR21071:SF4">
    <property type="entry name" value="UDP-N-ACETYLENOLPYRUVOYLGLUCOSAMINE REDUCTASE"/>
    <property type="match status" value="1"/>
</dbReference>
<dbReference type="Pfam" id="PF01565">
    <property type="entry name" value="FAD_binding_4"/>
    <property type="match status" value="1"/>
</dbReference>
<dbReference type="Pfam" id="PF02873">
    <property type="entry name" value="MurB_C"/>
    <property type="match status" value="1"/>
</dbReference>
<dbReference type="SUPFAM" id="SSF56176">
    <property type="entry name" value="FAD-binding/transporter-associated domain-like"/>
    <property type="match status" value="1"/>
</dbReference>
<dbReference type="SUPFAM" id="SSF56194">
    <property type="entry name" value="Uridine diphospho-N-Acetylenolpyruvylglucosamine reductase, MurB, C-terminal domain"/>
    <property type="match status" value="1"/>
</dbReference>
<dbReference type="PROSITE" id="PS51387">
    <property type="entry name" value="FAD_PCMH"/>
    <property type="match status" value="1"/>
</dbReference>
<gene>
    <name evidence="1" type="primary">murB</name>
    <name type="ordered locus">SP_1390</name>
</gene>
<proteinExistence type="inferred from homology"/>
<feature type="chain" id="PRO_0000179270" description="UDP-N-acetylenolpyruvoylglucosamine reductase">
    <location>
        <begin position="1"/>
        <end position="316"/>
    </location>
</feature>
<feature type="domain" description="FAD-binding PCMH-type" evidence="1">
    <location>
        <begin position="30"/>
        <end position="194"/>
    </location>
</feature>
<feature type="active site" evidence="1">
    <location>
        <position position="173"/>
    </location>
</feature>
<feature type="active site" description="Proton donor" evidence="1">
    <location>
        <position position="223"/>
    </location>
</feature>
<feature type="active site" evidence="1">
    <location>
        <position position="293"/>
    </location>
</feature>
<evidence type="ECO:0000255" key="1">
    <source>
        <dbReference type="HAMAP-Rule" id="MF_00037"/>
    </source>
</evidence>
<comment type="function">
    <text evidence="1">Cell wall formation.</text>
</comment>
<comment type="catalytic activity">
    <reaction evidence="1">
        <text>UDP-N-acetyl-alpha-D-muramate + NADP(+) = UDP-N-acetyl-3-O-(1-carboxyvinyl)-alpha-D-glucosamine + NADPH + H(+)</text>
        <dbReference type="Rhea" id="RHEA:12248"/>
        <dbReference type="ChEBI" id="CHEBI:15378"/>
        <dbReference type="ChEBI" id="CHEBI:57783"/>
        <dbReference type="ChEBI" id="CHEBI:58349"/>
        <dbReference type="ChEBI" id="CHEBI:68483"/>
        <dbReference type="ChEBI" id="CHEBI:70757"/>
        <dbReference type="EC" id="1.3.1.98"/>
    </reaction>
</comment>
<comment type="cofactor">
    <cofactor evidence="1">
        <name>FAD</name>
        <dbReference type="ChEBI" id="CHEBI:57692"/>
    </cofactor>
</comment>
<comment type="pathway">
    <text evidence="1">Cell wall biogenesis; peptidoglycan biosynthesis.</text>
</comment>
<comment type="subcellular location">
    <subcellularLocation>
        <location evidence="1">Cytoplasm</location>
    </subcellularLocation>
</comment>
<comment type="similarity">
    <text evidence="1">Belongs to the MurB family.</text>
</comment>
<accession>P65466</accession>
<accession>Q8DPC1</accession>
<accession>Q97Q41</accession>
<sequence>MSVREKMLEILEGIDIRFKEPLHSYSYTKVGGEADYLVFPRNRFELARVVKFANQENIPWMVLGNASNIIVRDGGIRGFVILCDKLNNVSVDGYTIEAEAGANLIETTRIALRHSLTGFEFACGIPGSVGGAVFMNAGAYGGEIAHILQSCKVLTKDGEIETLSAKDLAFGYRHSAIQESGAVVLSVKFALAPGTHQVIKQEMDRLTHLRELKQPLEYPSCGSVFKRPVGHFAGQLISEAGLKGYRIGGVEVSEKHAGFMINVADGTAKDYEDLIQSVIEKVKEHSGITLEREVRILGESLSVAKMYAGGFTPCKR</sequence>
<reference key="1">
    <citation type="journal article" date="2001" name="Science">
        <title>Complete genome sequence of a virulent isolate of Streptococcus pneumoniae.</title>
        <authorList>
            <person name="Tettelin H."/>
            <person name="Nelson K.E."/>
            <person name="Paulsen I.T."/>
            <person name="Eisen J.A."/>
            <person name="Read T.D."/>
            <person name="Peterson S.N."/>
            <person name="Heidelberg J.F."/>
            <person name="DeBoy R.T."/>
            <person name="Haft D.H."/>
            <person name="Dodson R.J."/>
            <person name="Durkin A.S."/>
            <person name="Gwinn M.L."/>
            <person name="Kolonay J.F."/>
            <person name="Nelson W.C."/>
            <person name="Peterson J.D."/>
            <person name="Umayam L.A."/>
            <person name="White O."/>
            <person name="Salzberg S.L."/>
            <person name="Lewis M.R."/>
            <person name="Radune D."/>
            <person name="Holtzapple E.K."/>
            <person name="Khouri H.M."/>
            <person name="Wolf A.M."/>
            <person name="Utterback T.R."/>
            <person name="Hansen C.L."/>
            <person name="McDonald L.A."/>
            <person name="Feldblyum T.V."/>
            <person name="Angiuoli S.V."/>
            <person name="Dickinson T."/>
            <person name="Hickey E.K."/>
            <person name="Holt I.E."/>
            <person name="Loftus B.J."/>
            <person name="Yang F."/>
            <person name="Smith H.O."/>
            <person name="Venter J.C."/>
            <person name="Dougherty B.A."/>
            <person name="Morrison D.A."/>
            <person name="Hollingshead S.K."/>
            <person name="Fraser C.M."/>
        </authorList>
    </citation>
    <scope>NUCLEOTIDE SEQUENCE [LARGE SCALE GENOMIC DNA]</scope>
    <source>
        <strain>ATCC BAA-334 / TIGR4</strain>
    </source>
</reference>
<organism>
    <name type="scientific">Streptococcus pneumoniae serotype 4 (strain ATCC BAA-334 / TIGR4)</name>
    <dbReference type="NCBI Taxonomy" id="170187"/>
    <lineage>
        <taxon>Bacteria</taxon>
        <taxon>Bacillati</taxon>
        <taxon>Bacillota</taxon>
        <taxon>Bacilli</taxon>
        <taxon>Lactobacillales</taxon>
        <taxon>Streptococcaceae</taxon>
        <taxon>Streptococcus</taxon>
    </lineage>
</organism>
<protein>
    <recommendedName>
        <fullName evidence="1">UDP-N-acetylenolpyruvoylglucosamine reductase</fullName>
        <ecNumber evidence="1">1.3.1.98</ecNumber>
    </recommendedName>
    <alternativeName>
        <fullName evidence="1">UDP-N-acetylmuramate dehydrogenase</fullName>
    </alternativeName>
</protein>
<name>MURB_STRPN</name>
<keyword id="KW-0131">Cell cycle</keyword>
<keyword id="KW-0132">Cell division</keyword>
<keyword id="KW-0133">Cell shape</keyword>
<keyword id="KW-0961">Cell wall biogenesis/degradation</keyword>
<keyword id="KW-0963">Cytoplasm</keyword>
<keyword id="KW-0274">FAD</keyword>
<keyword id="KW-0285">Flavoprotein</keyword>
<keyword id="KW-0521">NADP</keyword>
<keyword id="KW-0560">Oxidoreductase</keyword>
<keyword id="KW-0573">Peptidoglycan synthesis</keyword>
<keyword id="KW-1185">Reference proteome</keyword>